<keyword id="KW-0020">Allergen</keyword>
<keyword id="KW-0175">Coiled coil</keyword>
<keyword id="KW-0514">Muscle protein</keyword>
<keyword id="KW-0677">Repeat</keyword>
<comment type="function">
    <text evidence="2">Tropomyosin, in association with the troponin complex, plays a central role in the calcium dependent regulation of muscle contraction.</text>
</comment>
<comment type="subunit">
    <text evidence="1">Homodimer.</text>
</comment>
<comment type="tissue specificity">
    <text evidence="6">Ubiquitous, but especially prevalent in the anterior muscle bundles associated with legs. Expression in the mid and posterior regions is probably related to the numerous, small muscle bundles associated with the digestive and reproductive systems (at protein level).</text>
</comment>
<comment type="domain">
    <text evidence="9">The molecule is in a coiled coil structure that is formed by 2 polypeptide chains. The sequence exhibits a prominent seven-residues periodicity.</text>
</comment>
<comment type="allergen">
    <text evidence="5 6">Causes an allergic reaction in sheep (PubMed:15679630, PubMed:16817997). Binds to IgE of sheep allergic to scab mites (PubMed:15679630).</text>
</comment>
<comment type="similarity">
    <text evidence="4 9">Belongs to the tropomyosin family.</text>
</comment>
<evidence type="ECO:0000250" key="1">
    <source>
        <dbReference type="UniProtKB" id="A2V735"/>
    </source>
</evidence>
<evidence type="ECO:0000250" key="2">
    <source>
        <dbReference type="UniProtKB" id="Q22866"/>
    </source>
</evidence>
<evidence type="ECO:0000255" key="3"/>
<evidence type="ECO:0000255" key="4">
    <source>
        <dbReference type="RuleBase" id="RU004515"/>
    </source>
</evidence>
<evidence type="ECO:0000269" key="5">
    <source>
    </source>
</evidence>
<evidence type="ECO:0000269" key="6">
    <source>
    </source>
</evidence>
<evidence type="ECO:0000303" key="7">
    <source>
    </source>
</evidence>
<evidence type="ECO:0000303" key="8">
    <source>
    </source>
</evidence>
<evidence type="ECO:0000305" key="9"/>
<evidence type="ECO:0000312" key="10">
    <source>
        <dbReference type="EMBL" id="CAJ38272.1"/>
    </source>
</evidence>
<organism evidence="10">
    <name type="scientific">Psoroptes ovis</name>
    <name type="common">Sheep scab mite</name>
    <dbReference type="NCBI Taxonomy" id="83912"/>
    <lineage>
        <taxon>Eukaryota</taxon>
        <taxon>Metazoa</taxon>
        <taxon>Ecdysozoa</taxon>
        <taxon>Arthropoda</taxon>
        <taxon>Chelicerata</taxon>
        <taxon>Arachnida</taxon>
        <taxon>Acari</taxon>
        <taxon>Acariformes</taxon>
        <taxon>Sarcoptiformes</taxon>
        <taxon>Astigmata</taxon>
        <taxon>Psoroptidia</taxon>
        <taxon>Sarcoptoidea</taxon>
        <taxon>Psoroptidae</taxon>
        <taxon>Psoroptes</taxon>
    </lineage>
</organism>
<dbReference type="EMBL" id="AM114276">
    <property type="protein sequence ID" value="CAJ38272.1"/>
    <property type="molecule type" value="mRNA"/>
</dbReference>
<dbReference type="SMR" id="Q3BJY7"/>
<dbReference type="Allergome" id="2488">
    <property type="allergen name" value="Pso o 10"/>
</dbReference>
<dbReference type="Allergome" id="4108">
    <property type="allergen name" value="Pso o 10.0101"/>
</dbReference>
<dbReference type="GO" id="GO:0043292">
    <property type="term" value="C:contractile muscle fiber"/>
    <property type="evidence" value="ECO:0000314"/>
    <property type="project" value="UniProtKB"/>
</dbReference>
<dbReference type="GO" id="GO:0042803">
    <property type="term" value="F:protein homodimerization activity"/>
    <property type="evidence" value="ECO:0000250"/>
    <property type="project" value="UniProtKB"/>
</dbReference>
<dbReference type="GO" id="GO:0006937">
    <property type="term" value="P:regulation of muscle contraction"/>
    <property type="evidence" value="ECO:0000250"/>
    <property type="project" value="UniProtKB"/>
</dbReference>
<dbReference type="FunFam" id="1.20.5.170:FF:000005">
    <property type="entry name" value="Tropomyosin alpha-1 chain"/>
    <property type="match status" value="1"/>
</dbReference>
<dbReference type="FunFam" id="1.20.5.170:FF:000001">
    <property type="entry name" value="Tropomyosin alpha-1 chain isoform 1"/>
    <property type="match status" value="1"/>
</dbReference>
<dbReference type="FunFam" id="1.20.5.340:FF:000001">
    <property type="entry name" value="Tropomyosin alpha-1 chain isoform 2"/>
    <property type="match status" value="1"/>
</dbReference>
<dbReference type="Gene3D" id="1.20.5.170">
    <property type="match status" value="2"/>
</dbReference>
<dbReference type="Gene3D" id="1.20.5.340">
    <property type="match status" value="1"/>
</dbReference>
<dbReference type="InterPro" id="IPR000533">
    <property type="entry name" value="Tropomyosin"/>
</dbReference>
<dbReference type="PANTHER" id="PTHR19269">
    <property type="entry name" value="TROPOMYOSIN"/>
    <property type="match status" value="1"/>
</dbReference>
<dbReference type="Pfam" id="PF00261">
    <property type="entry name" value="Tropomyosin"/>
    <property type="match status" value="1"/>
</dbReference>
<dbReference type="PRINTS" id="PR00194">
    <property type="entry name" value="TROPOMYOSIN"/>
</dbReference>
<dbReference type="SUPFAM" id="SSF57997">
    <property type="entry name" value="Tropomyosin"/>
    <property type="match status" value="1"/>
</dbReference>
<dbReference type="PROSITE" id="PS00326">
    <property type="entry name" value="TROPOMYOSIN"/>
    <property type="match status" value="1"/>
</dbReference>
<accession>Q3BJY7</accession>
<proteinExistence type="evidence at protein level"/>
<name>TPM_PSOOV</name>
<reference evidence="10" key="1">
    <citation type="journal article" date="2006" name="Parasitology">
        <title>Molecular characterization, expression and localization of tropomyosin and paramyosin immunodominant allergens from sheep scab mites (Psoroptes ovis).</title>
        <authorList>
            <person name="Nisbet A.J."/>
            <person name="MacKellar A."/>
            <person name="Wright H.W."/>
            <person name="Brennan G.P."/>
            <person name="Chua K.Y."/>
            <person name="Cheong N."/>
            <person name="Thomas J.E."/>
            <person name="Huntley J.F."/>
        </authorList>
    </citation>
    <scope>NUCLEOTIDE SEQUENCE [MRNA]</scope>
    <scope>TISSUE SPECIFICITY</scope>
    <scope>ALLERGEN</scope>
</reference>
<reference key="2">
    <citation type="journal article" date="2004" name="Parasite Immunol.">
        <title>Identification of tropomyosin, paramyosin and apolipophorin/vitellogenin as three major allergens of the sheep scab mite, Psoroptes ovis.</title>
        <authorList>
            <person name="Huntley J.F."/>
            <person name="Machell J."/>
            <person name="Nisbet A.J."/>
            <person name="Van den Broek A."/>
            <person name="Chua K.Y."/>
            <person name="Cheong N."/>
            <person name="Hales B.J."/>
            <person name="Thomas W.R."/>
        </authorList>
    </citation>
    <scope>IDENTIFICATION BY MASS SPECTROMETRY</scope>
    <scope>ALLERGEN</scope>
</reference>
<feature type="chain" id="PRO_0000447465" description="Tropomyosin">
    <location>
        <begin position="1"/>
        <end position="284"/>
    </location>
</feature>
<feature type="coiled-coil region" evidence="3">
    <location>
        <begin position="1"/>
        <end position="273"/>
    </location>
</feature>
<sequence length="284" mass="32914">MEAIKKKMQAMKLEKDNAIDRAEIAEQKARDANLRAEKSEEEVRGLQKKIQQIENELDQVQEQLSAANTKLEEKKKALQTAEGDVAALNRRIQLIEEDLERSEERLKIATAKLEEASQSADESERMRKMLEHRSITDEERMDGLENQLKEARMMAEDADRKYDEVARKLAMVEADLERAEERAETGESKIVELEEELRVVGNNLKSLEVSEEKAQQREEAHEQQIRIMTAKLKEAEARAEFAERSVQKLQKEVDRLEDELVHEKEKYKSISDELDQTFAELTGY</sequence>
<protein>
    <recommendedName>
        <fullName evidence="7 8">Tropomyosin</fullName>
    </recommendedName>
    <alternativeName>
        <fullName evidence="8">PoTRO</fullName>
    </alternativeName>
    <allergenName evidence="9">Pso o 10.0101</allergenName>
</protein>